<proteinExistence type="inferred from homology"/>
<accession>P44500</accession>
<reference key="1">
    <citation type="journal article" date="1995" name="Science">
        <title>Whole-genome random sequencing and assembly of Haemophilus influenzae Rd.</title>
        <authorList>
            <person name="Fleischmann R.D."/>
            <person name="Adams M.D."/>
            <person name="White O."/>
            <person name="Clayton R.A."/>
            <person name="Kirkness E.F."/>
            <person name="Kerlavage A.R."/>
            <person name="Bult C.J."/>
            <person name="Tomb J.-F."/>
            <person name="Dougherty B.A."/>
            <person name="Merrick J.M."/>
            <person name="McKenney K."/>
            <person name="Sutton G.G."/>
            <person name="FitzHugh W."/>
            <person name="Fields C.A."/>
            <person name="Gocayne J.D."/>
            <person name="Scott J.D."/>
            <person name="Shirley R."/>
            <person name="Liu L.-I."/>
            <person name="Glodek A."/>
            <person name="Kelley J.M."/>
            <person name="Weidman J.F."/>
            <person name="Phillips C.A."/>
            <person name="Spriggs T."/>
            <person name="Hedblom E."/>
            <person name="Cotton M.D."/>
            <person name="Utterback T.R."/>
            <person name="Hanna M.C."/>
            <person name="Nguyen D.T."/>
            <person name="Saudek D.M."/>
            <person name="Brandon R.C."/>
            <person name="Fine L.D."/>
            <person name="Fritchman J.L."/>
            <person name="Fuhrmann J.L."/>
            <person name="Geoghagen N.S.M."/>
            <person name="Gnehm C.L."/>
            <person name="McDonald L.A."/>
            <person name="Small K.V."/>
            <person name="Fraser C.M."/>
            <person name="Smith H.O."/>
            <person name="Venter J.C."/>
        </authorList>
    </citation>
    <scope>NUCLEOTIDE SEQUENCE [LARGE SCALE GENOMIC DNA]</scope>
    <source>
        <strain>ATCC 51907 / DSM 11121 / KW20 / Rd</strain>
    </source>
</reference>
<keyword id="KW-0378">Hydrolase</keyword>
<keyword id="KW-0479">Metal-binding</keyword>
<keyword id="KW-1185">Reference proteome</keyword>
<protein>
    <recommendedName>
        <fullName evidence="2">Uncharacterized metal-dependent hydrolase HI_0081</fullName>
        <ecNumber evidence="2">3.1.-.-</ecNumber>
    </recommendedName>
</protein>
<organism>
    <name type="scientific">Haemophilus influenzae (strain ATCC 51907 / DSM 11121 / KW20 / Rd)</name>
    <dbReference type="NCBI Taxonomy" id="71421"/>
    <lineage>
        <taxon>Bacteria</taxon>
        <taxon>Pseudomonadati</taxon>
        <taxon>Pseudomonadota</taxon>
        <taxon>Gammaproteobacteria</taxon>
        <taxon>Pasteurellales</taxon>
        <taxon>Pasteurellaceae</taxon>
        <taxon>Haemophilus</taxon>
    </lineage>
</organism>
<feature type="chain" id="PRO_0000202000" description="Uncharacterized metal-dependent hydrolase HI_0081">
    <location>
        <begin position="1"/>
        <end position="262"/>
    </location>
</feature>
<feature type="binding site" evidence="1">
    <location>
        <position position="7"/>
    </location>
    <ligand>
        <name>a divalent metal cation</name>
        <dbReference type="ChEBI" id="CHEBI:60240"/>
        <label>1</label>
    </ligand>
</feature>
<feature type="binding site" evidence="1">
    <location>
        <position position="9"/>
    </location>
    <ligand>
        <name>a divalent metal cation</name>
        <dbReference type="ChEBI" id="CHEBI:60240"/>
        <label>1</label>
    </ligand>
</feature>
<feature type="binding site" evidence="1">
    <location>
        <position position="98"/>
    </location>
    <ligand>
        <name>a divalent metal cation</name>
        <dbReference type="ChEBI" id="CHEBI:60240"/>
        <label>1</label>
    </ligand>
</feature>
<feature type="binding site" evidence="1">
    <location>
        <position position="98"/>
    </location>
    <ligand>
        <name>a divalent metal cation</name>
        <dbReference type="ChEBI" id="CHEBI:60240"/>
        <label>2</label>
    </ligand>
</feature>
<feature type="binding site" evidence="1">
    <location>
        <position position="138"/>
    </location>
    <ligand>
        <name>a divalent metal cation</name>
        <dbReference type="ChEBI" id="CHEBI:60240"/>
        <label>2</label>
    </ligand>
</feature>
<feature type="binding site" evidence="1">
    <location>
        <position position="162"/>
    </location>
    <ligand>
        <name>a divalent metal cation</name>
        <dbReference type="ChEBI" id="CHEBI:60240"/>
        <label>2</label>
    </ligand>
</feature>
<feature type="binding site" evidence="1">
    <location>
        <position position="212"/>
    </location>
    <ligand>
        <name>a divalent metal cation</name>
        <dbReference type="ChEBI" id="CHEBI:60240"/>
        <label>1</label>
    </ligand>
</feature>
<comment type="cofactor">
    <cofactor evidence="1">
        <name>a divalent metal cation</name>
        <dbReference type="ChEBI" id="CHEBI:60240"/>
    </cofactor>
    <text evidence="1">Binds 2 divalent metal cations per subunit.</text>
</comment>
<comment type="similarity">
    <text evidence="2">Belongs to the metallo-dependent hydrolases superfamily. TatD-type hydrolase family.</text>
</comment>
<gene>
    <name type="ordered locus">HI_0081</name>
</gene>
<evidence type="ECO:0000250" key="1">
    <source>
        <dbReference type="UniProtKB" id="P0AFQ7"/>
    </source>
</evidence>
<evidence type="ECO:0000305" key="2"/>
<sequence length="262" mass="29789">MHFFDTHTHLNYLQQFTGEPLSQLIDNAKQADVQKILVVAVKEADFKTIQNMTALFPDNLCYGLGLHPLYIQEHAENDLILLEQALKNRDTNCTAVAEIGLERAIPDLLTDELWAKQCHFFESQLYLAKQFNLPVNIHSRKTHDQIFTFLKRIPLSKLGVVHGFSGSYDQAKRFVDLGYKIGVGGTITYERANKTRQAIAKLPLDALVLETDSPDMPVFGFQGQPNRPERIVESFKALCTLRNEPAELIKKLTWENACQIFS</sequence>
<name>Y081_HAEIN</name>
<dbReference type="EC" id="3.1.-.-" evidence="2"/>
<dbReference type="EMBL" id="L42023">
    <property type="protein sequence ID" value="AAC21756.1"/>
    <property type="molecule type" value="Genomic_DNA"/>
</dbReference>
<dbReference type="PIR" id="A64142">
    <property type="entry name" value="A64142"/>
</dbReference>
<dbReference type="RefSeq" id="NP_438254.1">
    <property type="nucleotide sequence ID" value="NC_000907.1"/>
</dbReference>
<dbReference type="SMR" id="P44500"/>
<dbReference type="STRING" id="71421.HI_0081"/>
<dbReference type="EnsemblBacteria" id="AAC21756">
    <property type="protein sequence ID" value="AAC21756"/>
    <property type="gene ID" value="HI_0081"/>
</dbReference>
<dbReference type="KEGG" id="hin:HI_0081"/>
<dbReference type="PATRIC" id="fig|71421.8.peg.82"/>
<dbReference type="eggNOG" id="COG0084">
    <property type="taxonomic scope" value="Bacteria"/>
</dbReference>
<dbReference type="HOGENOM" id="CLU_031506_0_1_6"/>
<dbReference type="OrthoDB" id="9810005at2"/>
<dbReference type="PhylomeDB" id="P44500"/>
<dbReference type="BioCyc" id="HINF71421:G1GJ1-82-MONOMER"/>
<dbReference type="Proteomes" id="UP000000579">
    <property type="component" value="Chromosome"/>
</dbReference>
<dbReference type="GO" id="GO:0005829">
    <property type="term" value="C:cytosol"/>
    <property type="evidence" value="ECO:0000318"/>
    <property type="project" value="GO_Central"/>
</dbReference>
<dbReference type="GO" id="GO:0016788">
    <property type="term" value="F:hydrolase activity, acting on ester bonds"/>
    <property type="evidence" value="ECO:0007669"/>
    <property type="project" value="InterPro"/>
</dbReference>
<dbReference type="GO" id="GO:0046872">
    <property type="term" value="F:metal ion binding"/>
    <property type="evidence" value="ECO:0007669"/>
    <property type="project" value="UniProtKB-KW"/>
</dbReference>
<dbReference type="CDD" id="cd01310">
    <property type="entry name" value="TatD_DNAse"/>
    <property type="match status" value="1"/>
</dbReference>
<dbReference type="FunFam" id="3.20.20.140:FF:000005">
    <property type="entry name" value="TatD family hydrolase"/>
    <property type="match status" value="1"/>
</dbReference>
<dbReference type="Gene3D" id="3.20.20.140">
    <property type="entry name" value="Metal-dependent hydrolases"/>
    <property type="match status" value="1"/>
</dbReference>
<dbReference type="InterPro" id="IPR018228">
    <property type="entry name" value="DNase_TatD-rel_CS"/>
</dbReference>
<dbReference type="InterPro" id="IPR032466">
    <property type="entry name" value="Metal_Hydrolase"/>
</dbReference>
<dbReference type="InterPro" id="IPR001130">
    <property type="entry name" value="TatD-like"/>
</dbReference>
<dbReference type="PANTHER" id="PTHR46124">
    <property type="entry name" value="D-AMINOACYL-TRNA DEACYLASE"/>
    <property type="match status" value="1"/>
</dbReference>
<dbReference type="PANTHER" id="PTHR46124:SF3">
    <property type="entry name" value="HYDROLASE"/>
    <property type="match status" value="1"/>
</dbReference>
<dbReference type="Pfam" id="PF01026">
    <property type="entry name" value="TatD_DNase"/>
    <property type="match status" value="1"/>
</dbReference>
<dbReference type="PIRSF" id="PIRSF005902">
    <property type="entry name" value="DNase_TatD"/>
    <property type="match status" value="1"/>
</dbReference>
<dbReference type="SUPFAM" id="SSF51556">
    <property type="entry name" value="Metallo-dependent hydrolases"/>
    <property type="match status" value="1"/>
</dbReference>
<dbReference type="PROSITE" id="PS01137">
    <property type="entry name" value="TATD_1"/>
    <property type="match status" value="1"/>
</dbReference>
<dbReference type="PROSITE" id="PS01090">
    <property type="entry name" value="TATD_2"/>
    <property type="match status" value="1"/>
</dbReference>
<dbReference type="PROSITE" id="PS01091">
    <property type="entry name" value="TATD_3"/>
    <property type="match status" value="1"/>
</dbReference>